<name>FLUC2_STAAW</name>
<dbReference type="EMBL" id="BA000033">
    <property type="protein sequence ID" value="BAB95589.1"/>
    <property type="molecule type" value="Genomic_DNA"/>
</dbReference>
<dbReference type="RefSeq" id="WP_000623476.1">
    <property type="nucleotide sequence ID" value="NC_003923.1"/>
</dbReference>
<dbReference type="SMR" id="Q8NW03"/>
<dbReference type="KEGG" id="sam:MW1724"/>
<dbReference type="HOGENOM" id="CLU_114342_2_3_9"/>
<dbReference type="GO" id="GO:0005886">
    <property type="term" value="C:plasma membrane"/>
    <property type="evidence" value="ECO:0007669"/>
    <property type="project" value="UniProtKB-SubCell"/>
</dbReference>
<dbReference type="GO" id="GO:0062054">
    <property type="term" value="F:fluoride channel activity"/>
    <property type="evidence" value="ECO:0007669"/>
    <property type="project" value="UniProtKB-UniRule"/>
</dbReference>
<dbReference type="GO" id="GO:0046872">
    <property type="term" value="F:metal ion binding"/>
    <property type="evidence" value="ECO:0007669"/>
    <property type="project" value="UniProtKB-KW"/>
</dbReference>
<dbReference type="GO" id="GO:0140114">
    <property type="term" value="P:cellular detoxification of fluoride"/>
    <property type="evidence" value="ECO:0007669"/>
    <property type="project" value="UniProtKB-UniRule"/>
</dbReference>
<dbReference type="HAMAP" id="MF_00454">
    <property type="entry name" value="FluC"/>
    <property type="match status" value="1"/>
</dbReference>
<dbReference type="InterPro" id="IPR003691">
    <property type="entry name" value="FluC"/>
</dbReference>
<dbReference type="PANTHER" id="PTHR28259">
    <property type="entry name" value="FLUORIDE EXPORT PROTEIN 1-RELATED"/>
    <property type="match status" value="1"/>
</dbReference>
<dbReference type="PANTHER" id="PTHR28259:SF16">
    <property type="entry name" value="FLUORIDE-SPECIFIC ION CHANNEL FLUC 2"/>
    <property type="match status" value="1"/>
</dbReference>
<dbReference type="Pfam" id="PF02537">
    <property type="entry name" value="CRCB"/>
    <property type="match status" value="1"/>
</dbReference>
<sequence length="117" mass="12839">MISIILVMIGGGFGAITRSAITDYFNHKFTSKLPIATLIVNLVGSFLIGLNIGLSISISWFPAFFVTGFLGGLTTFSTLAKELTLMMTPKFNINLFLNYSLLQFIIGFIACYIGYHI</sequence>
<reference key="1">
    <citation type="journal article" date="2002" name="Lancet">
        <title>Genome and virulence determinants of high virulence community-acquired MRSA.</title>
        <authorList>
            <person name="Baba T."/>
            <person name="Takeuchi F."/>
            <person name="Kuroda M."/>
            <person name="Yuzawa H."/>
            <person name="Aoki K."/>
            <person name="Oguchi A."/>
            <person name="Nagai Y."/>
            <person name="Iwama N."/>
            <person name="Asano K."/>
            <person name="Naimi T."/>
            <person name="Kuroda H."/>
            <person name="Cui L."/>
            <person name="Yamamoto K."/>
            <person name="Hiramatsu K."/>
        </authorList>
    </citation>
    <scope>NUCLEOTIDE SEQUENCE [LARGE SCALE GENOMIC DNA]</scope>
    <source>
        <strain>MW2</strain>
    </source>
</reference>
<comment type="function">
    <text evidence="1">Fluoride-specific ion channel. Important for reducing fluoride concentration in the cell, thus reducing its toxicity.</text>
</comment>
<comment type="catalytic activity">
    <reaction evidence="1">
        <text>fluoride(in) = fluoride(out)</text>
        <dbReference type="Rhea" id="RHEA:76159"/>
        <dbReference type="ChEBI" id="CHEBI:17051"/>
    </reaction>
    <physiologicalReaction direction="left-to-right" evidence="1">
        <dbReference type="Rhea" id="RHEA:76160"/>
    </physiologicalReaction>
</comment>
<comment type="activity regulation">
    <text evidence="1">Na(+) is not transported, but it plays an essential structural role and its presence is essential for fluoride channel function.</text>
</comment>
<comment type="subcellular location">
    <subcellularLocation>
        <location evidence="1">Cell membrane</location>
        <topology evidence="1">Multi-pass membrane protein</topology>
    </subcellularLocation>
</comment>
<comment type="similarity">
    <text evidence="1">Belongs to the fluoride channel Fluc/FEX (TC 1.A.43) family.</text>
</comment>
<feature type="chain" id="PRO_0000110184" description="Fluoride-specific ion channel FluC 2">
    <location>
        <begin position="1"/>
        <end position="117"/>
    </location>
</feature>
<feature type="transmembrane region" description="Helical" evidence="1">
    <location>
        <begin position="1"/>
        <end position="21"/>
    </location>
</feature>
<feature type="transmembrane region" description="Helical" evidence="1">
    <location>
        <begin position="46"/>
        <end position="66"/>
    </location>
</feature>
<feature type="transmembrane region" description="Helical" evidence="1">
    <location>
        <begin position="95"/>
        <end position="115"/>
    </location>
</feature>
<feature type="binding site" evidence="1">
    <location>
        <position position="71"/>
    </location>
    <ligand>
        <name>Na(+)</name>
        <dbReference type="ChEBI" id="CHEBI:29101"/>
        <note>structural</note>
    </ligand>
</feature>
<feature type="binding site" evidence="1">
    <location>
        <position position="74"/>
    </location>
    <ligand>
        <name>Na(+)</name>
        <dbReference type="ChEBI" id="CHEBI:29101"/>
        <note>structural</note>
    </ligand>
</feature>
<keyword id="KW-1003">Cell membrane</keyword>
<keyword id="KW-0407">Ion channel</keyword>
<keyword id="KW-0406">Ion transport</keyword>
<keyword id="KW-0472">Membrane</keyword>
<keyword id="KW-0479">Metal-binding</keyword>
<keyword id="KW-0915">Sodium</keyword>
<keyword id="KW-0812">Transmembrane</keyword>
<keyword id="KW-1133">Transmembrane helix</keyword>
<keyword id="KW-0813">Transport</keyword>
<evidence type="ECO:0000255" key="1">
    <source>
        <dbReference type="HAMAP-Rule" id="MF_00454"/>
    </source>
</evidence>
<proteinExistence type="inferred from homology"/>
<organism>
    <name type="scientific">Staphylococcus aureus (strain MW2)</name>
    <dbReference type="NCBI Taxonomy" id="196620"/>
    <lineage>
        <taxon>Bacteria</taxon>
        <taxon>Bacillati</taxon>
        <taxon>Bacillota</taxon>
        <taxon>Bacilli</taxon>
        <taxon>Bacillales</taxon>
        <taxon>Staphylococcaceae</taxon>
        <taxon>Staphylococcus</taxon>
    </lineage>
</organism>
<protein>
    <recommendedName>
        <fullName evidence="1">Fluoride-specific ion channel FluC 2</fullName>
    </recommendedName>
</protein>
<gene>
    <name evidence="1" type="primary">fluC2</name>
    <name evidence="1" type="synonym">crcB2</name>
    <name type="ordered locus">MW1724</name>
</gene>
<accession>Q8NW03</accession>